<sequence length="494" mass="54885">MGRLVEAIIASILLSLCFTITKSAPKSALITNLPGFNGTFPSKHYAGYVAIDKHRNKNLWYYFVESERNASVDPVVLWLNGGPGCSSMDGFVYEHGPFNFEPKKKNSHLLHLNPYSWSKVSNIIYLDSPVGVGFSYSNDNADYTTDDTKTASDTHTFLLEWFKMFPEFQSNPFFISGESYAGIYVPTLAAEVVKGHKNVTKPVINFKGYLVGNGVTDEVFDGNALVPFTHGMGLISDELYEETKLVCNGTYYTGGQSGVSKECAGKLKTVSDTVNLLNLYNILEPCYHGTSLSALDIEFLPKSLLTLGKTEKPMAVRKRMFGRAWPLGAVVRPGIVPSWSQLLAGFGVPCIDDTVATKWLNDPAVRKAVHAKEEKAIGNWELCSSNLEYRHDTGSMIEYHRNLTLSGFRALIFSGDHDMCVPYTGSEAWTKAMGYKVVDEWRPWMSNNQVAGFTQGYANNLTFLTIKGAGHTVPEYKPRESLDFYSRFLAGEKI</sequence>
<organism>
    <name type="scientific">Arabidopsis thaliana</name>
    <name type="common">Mouse-ear cress</name>
    <dbReference type="NCBI Taxonomy" id="3702"/>
    <lineage>
        <taxon>Eukaryota</taxon>
        <taxon>Viridiplantae</taxon>
        <taxon>Streptophyta</taxon>
        <taxon>Embryophyta</taxon>
        <taxon>Tracheophyta</taxon>
        <taxon>Spermatophyta</taxon>
        <taxon>Magnoliopsida</taxon>
        <taxon>eudicotyledons</taxon>
        <taxon>Gunneridae</taxon>
        <taxon>Pentapetalae</taxon>
        <taxon>rosids</taxon>
        <taxon>malvids</taxon>
        <taxon>Brassicales</taxon>
        <taxon>Brassicaceae</taxon>
        <taxon>Camelineae</taxon>
        <taxon>Arabidopsis</taxon>
    </lineage>
</organism>
<evidence type="ECO:0000250" key="1"/>
<evidence type="ECO:0000255" key="2"/>
<evidence type="ECO:0000269" key="3">
    <source>
    </source>
</evidence>
<evidence type="ECO:0000305" key="4"/>
<proteinExistence type="evidence at transcript level"/>
<reference key="1">
    <citation type="journal article" date="2000" name="DNA Res.">
        <title>Structural analysis of Arabidopsis thaliana chromosome 3. I. Sequence features of the regions of 4,504,864 bp covered by sixty P1 and TAC clones.</title>
        <authorList>
            <person name="Sato S."/>
            <person name="Nakamura Y."/>
            <person name="Kaneko T."/>
            <person name="Katoh T."/>
            <person name="Asamizu E."/>
            <person name="Tabata S."/>
        </authorList>
    </citation>
    <scope>NUCLEOTIDE SEQUENCE [LARGE SCALE GENOMIC DNA]</scope>
    <source>
        <strain>cv. Columbia</strain>
    </source>
</reference>
<reference key="2">
    <citation type="journal article" date="2017" name="Plant J.">
        <title>Araport11: a complete reannotation of the Arabidopsis thaliana reference genome.</title>
        <authorList>
            <person name="Cheng C.Y."/>
            <person name="Krishnakumar V."/>
            <person name="Chan A.P."/>
            <person name="Thibaud-Nissen F."/>
            <person name="Schobel S."/>
            <person name="Town C.D."/>
        </authorList>
    </citation>
    <scope>GENOME REANNOTATION</scope>
    <source>
        <strain>cv. Columbia</strain>
    </source>
</reference>
<reference key="3">
    <citation type="journal article" date="2005" name="Plant Physiol.">
        <title>An expression and bioinformatics analysis of the Arabidopsis serine carboxypeptidase-like gene family.</title>
        <authorList>
            <person name="Fraser C.M."/>
            <person name="Rider L.W."/>
            <person name="Chapple C."/>
        </authorList>
    </citation>
    <scope>GENE FAMILY</scope>
    <scope>TISSUE SPECIFICITY</scope>
    <scope>NOMENCLATURE</scope>
</reference>
<accession>Q9LSV8</accession>
<accession>F4J901</accession>
<feature type="signal peptide" evidence="2">
    <location>
        <begin position="1"/>
        <end position="23"/>
    </location>
</feature>
<feature type="chain" id="PRO_0000274637" description="Serine carboxypeptidase-like 21">
    <location>
        <begin position="24"/>
        <end position="494"/>
    </location>
</feature>
<feature type="active site" evidence="1">
    <location>
        <position position="179"/>
    </location>
</feature>
<feature type="active site" evidence="1">
    <location>
        <position position="418"/>
    </location>
</feature>
<feature type="active site" evidence="1">
    <location>
        <position position="471"/>
    </location>
</feature>
<feature type="glycosylation site" description="N-linked (GlcNAc...) asparagine" evidence="2">
    <location>
        <position position="37"/>
    </location>
</feature>
<feature type="glycosylation site" description="N-linked (GlcNAc...) asparagine" evidence="2">
    <location>
        <position position="69"/>
    </location>
</feature>
<feature type="glycosylation site" description="N-linked (GlcNAc...) asparagine" evidence="2">
    <location>
        <position position="198"/>
    </location>
</feature>
<feature type="glycosylation site" description="N-linked (GlcNAc...) asparagine" evidence="2">
    <location>
        <position position="248"/>
    </location>
</feature>
<feature type="glycosylation site" description="N-linked (GlcNAc...) asparagine" evidence="2">
    <location>
        <position position="402"/>
    </location>
</feature>
<feature type="glycosylation site" description="N-linked (GlcNAc...) asparagine" evidence="2">
    <location>
        <position position="460"/>
    </location>
</feature>
<feature type="disulfide bond" evidence="1">
    <location>
        <begin position="85"/>
        <end position="383"/>
    </location>
</feature>
<feature type="disulfide bond" evidence="1">
    <location>
        <begin position="247"/>
        <end position="263"/>
    </location>
</feature>
<feature type="disulfide bond" evidence="1">
    <location>
        <begin position="286"/>
        <end position="350"/>
    </location>
</feature>
<keyword id="KW-0121">Carboxypeptidase</keyword>
<keyword id="KW-1015">Disulfide bond</keyword>
<keyword id="KW-0325">Glycoprotein</keyword>
<keyword id="KW-0378">Hydrolase</keyword>
<keyword id="KW-0645">Protease</keyword>
<keyword id="KW-1185">Reference proteome</keyword>
<keyword id="KW-0964">Secreted</keyword>
<keyword id="KW-0732">Signal</keyword>
<protein>
    <recommendedName>
        <fullName>Serine carboxypeptidase-like 21</fullName>
        <ecNumber>3.4.16.-</ecNumber>
    </recommendedName>
</protein>
<comment type="function">
    <text evidence="1">Probable carboxypeptidase.</text>
</comment>
<comment type="subcellular location">
    <subcellularLocation>
        <location evidence="4">Secreted</location>
    </subcellularLocation>
</comment>
<comment type="tissue specificity">
    <text evidence="3">Expressed in flowers and siliques.</text>
</comment>
<comment type="similarity">
    <text evidence="4">Belongs to the peptidase S10 family.</text>
</comment>
<comment type="sequence caution" evidence="4">
    <conflict type="erroneous gene model prediction">
        <sequence resource="EMBL-CDS" id="BAB01313"/>
    </conflict>
</comment>
<gene>
    <name type="primary">SCPL21</name>
    <name type="ordered locus">At3g25420</name>
    <name type="ORF">MWL2.3</name>
</gene>
<dbReference type="EC" id="3.4.16.-"/>
<dbReference type="EMBL" id="AB025639">
    <property type="protein sequence ID" value="BAB01313.1"/>
    <property type="status" value="ALT_SEQ"/>
    <property type="molecule type" value="Genomic_DNA"/>
</dbReference>
<dbReference type="EMBL" id="CP002686">
    <property type="protein sequence ID" value="AEE77009.2"/>
    <property type="molecule type" value="Genomic_DNA"/>
</dbReference>
<dbReference type="RefSeq" id="NP_001319641.1">
    <property type="nucleotide sequence ID" value="NM_001338744.1"/>
</dbReference>
<dbReference type="SMR" id="Q9LSV8"/>
<dbReference type="FunCoup" id="Q9LSV8">
    <property type="interactions" value="1034"/>
</dbReference>
<dbReference type="STRING" id="3702.Q9LSV8"/>
<dbReference type="ESTHER" id="arath-SCP21">
    <property type="family name" value="Carboxypeptidase_S10"/>
</dbReference>
<dbReference type="MEROPS" id="S10.A10"/>
<dbReference type="GlyCosmos" id="Q9LSV8">
    <property type="glycosylation" value="6 sites, No reported glycans"/>
</dbReference>
<dbReference type="GlyGen" id="Q9LSV8">
    <property type="glycosylation" value="6 sites"/>
</dbReference>
<dbReference type="PaxDb" id="3702-AT3G25420.1"/>
<dbReference type="ProteomicsDB" id="226628"/>
<dbReference type="EnsemblPlants" id="AT3G25420.1">
    <property type="protein sequence ID" value="AT3G25420.1"/>
    <property type="gene ID" value="AT3G25420"/>
</dbReference>
<dbReference type="GeneID" id="822126"/>
<dbReference type="Gramene" id="AT3G25420.1">
    <property type="protein sequence ID" value="AT3G25420.1"/>
    <property type="gene ID" value="AT3G25420"/>
</dbReference>
<dbReference type="KEGG" id="ath:AT3G25420"/>
<dbReference type="Araport" id="AT3G25420"/>
<dbReference type="TAIR" id="AT3G25420">
    <property type="gene designation" value="SCPL21"/>
</dbReference>
<dbReference type="eggNOG" id="KOG1282">
    <property type="taxonomic scope" value="Eukaryota"/>
</dbReference>
<dbReference type="HOGENOM" id="CLU_008523_0_1_1"/>
<dbReference type="InParanoid" id="Q9LSV8"/>
<dbReference type="OMA" id="MIPYHKT"/>
<dbReference type="PhylomeDB" id="Q9LSV8"/>
<dbReference type="PRO" id="PR:Q9LSV8"/>
<dbReference type="Proteomes" id="UP000006548">
    <property type="component" value="Chromosome 3"/>
</dbReference>
<dbReference type="ExpressionAtlas" id="Q9LSV8">
    <property type="expression patterns" value="baseline and differential"/>
</dbReference>
<dbReference type="GO" id="GO:0005576">
    <property type="term" value="C:extracellular region"/>
    <property type="evidence" value="ECO:0007669"/>
    <property type="project" value="UniProtKB-SubCell"/>
</dbReference>
<dbReference type="GO" id="GO:0004185">
    <property type="term" value="F:serine-type carboxypeptidase activity"/>
    <property type="evidence" value="ECO:0007669"/>
    <property type="project" value="InterPro"/>
</dbReference>
<dbReference type="GO" id="GO:0006508">
    <property type="term" value="P:proteolysis"/>
    <property type="evidence" value="ECO:0007669"/>
    <property type="project" value="UniProtKB-KW"/>
</dbReference>
<dbReference type="FunFam" id="3.40.50.12670:FF:000001">
    <property type="entry name" value="Carboxypeptidase"/>
    <property type="match status" value="1"/>
</dbReference>
<dbReference type="FunFam" id="3.40.50.1820:FF:000143">
    <property type="entry name" value="Carboxypeptidase"/>
    <property type="match status" value="1"/>
</dbReference>
<dbReference type="Gene3D" id="3.40.50.12670">
    <property type="match status" value="1"/>
</dbReference>
<dbReference type="Gene3D" id="3.40.50.1820">
    <property type="entry name" value="alpha/beta hydrolase"/>
    <property type="match status" value="1"/>
</dbReference>
<dbReference type="InterPro" id="IPR029058">
    <property type="entry name" value="AB_hydrolase_fold"/>
</dbReference>
<dbReference type="InterPro" id="IPR001563">
    <property type="entry name" value="Peptidase_S10"/>
</dbReference>
<dbReference type="InterPro" id="IPR033124">
    <property type="entry name" value="Ser_caboxypep_his_AS"/>
</dbReference>
<dbReference type="InterPro" id="IPR018202">
    <property type="entry name" value="Ser_caboxypep_ser_AS"/>
</dbReference>
<dbReference type="PANTHER" id="PTHR11802:SF334">
    <property type="entry name" value="SERINE CARBOXYPEPTIDASE-LIKE 21"/>
    <property type="match status" value="1"/>
</dbReference>
<dbReference type="PANTHER" id="PTHR11802">
    <property type="entry name" value="SERINE PROTEASE FAMILY S10 SERINE CARBOXYPEPTIDASE"/>
    <property type="match status" value="1"/>
</dbReference>
<dbReference type="Pfam" id="PF00450">
    <property type="entry name" value="Peptidase_S10"/>
    <property type="match status" value="1"/>
</dbReference>
<dbReference type="PRINTS" id="PR00724">
    <property type="entry name" value="CRBOXYPTASEC"/>
</dbReference>
<dbReference type="SUPFAM" id="SSF53474">
    <property type="entry name" value="alpha/beta-Hydrolases"/>
    <property type="match status" value="1"/>
</dbReference>
<dbReference type="PROSITE" id="PS00560">
    <property type="entry name" value="CARBOXYPEPT_SER_HIS"/>
    <property type="match status" value="1"/>
</dbReference>
<dbReference type="PROSITE" id="PS00131">
    <property type="entry name" value="CARBOXYPEPT_SER_SER"/>
    <property type="match status" value="1"/>
</dbReference>
<name>SCP21_ARATH</name>